<sequence>MKAVRLAVIDYDAGNLHSACKGLERAGAEVQLVTEPAGLAAFDGLVLPGDGAFDPAMQQLRARGFGEAIRQAIERQQPFLGICIGLQVLFEDSEEGTEPGLGIVPGRVQRFRPEPGLRIPHMGWNQLHLTQPDSPLWAGIPEQSWVYFVHSYHAVPKDPSWVVATTQHGSQTCVAAIARGTLFATQFHPEKSGPVGLKILQNFVEFVARRLPAAGA</sequence>
<comment type="function">
    <text evidence="1">IGPS catalyzes the conversion of PRFAR and glutamine to IGP, AICAR and glutamate. The HisH subunit catalyzes the hydrolysis of glutamine to glutamate and ammonia as part of the synthesis of IGP and AICAR. The resulting ammonia molecule is channeled to the active site of HisF.</text>
</comment>
<comment type="catalytic activity">
    <reaction evidence="1">
        <text>5-[(5-phospho-1-deoxy-D-ribulos-1-ylimino)methylamino]-1-(5-phospho-beta-D-ribosyl)imidazole-4-carboxamide + L-glutamine = D-erythro-1-(imidazol-4-yl)glycerol 3-phosphate + 5-amino-1-(5-phospho-beta-D-ribosyl)imidazole-4-carboxamide + L-glutamate + H(+)</text>
        <dbReference type="Rhea" id="RHEA:24793"/>
        <dbReference type="ChEBI" id="CHEBI:15378"/>
        <dbReference type="ChEBI" id="CHEBI:29985"/>
        <dbReference type="ChEBI" id="CHEBI:58278"/>
        <dbReference type="ChEBI" id="CHEBI:58359"/>
        <dbReference type="ChEBI" id="CHEBI:58475"/>
        <dbReference type="ChEBI" id="CHEBI:58525"/>
        <dbReference type="EC" id="4.3.2.10"/>
    </reaction>
</comment>
<comment type="catalytic activity">
    <reaction evidence="1">
        <text>L-glutamine + H2O = L-glutamate + NH4(+)</text>
        <dbReference type="Rhea" id="RHEA:15889"/>
        <dbReference type="ChEBI" id="CHEBI:15377"/>
        <dbReference type="ChEBI" id="CHEBI:28938"/>
        <dbReference type="ChEBI" id="CHEBI:29985"/>
        <dbReference type="ChEBI" id="CHEBI:58359"/>
        <dbReference type="EC" id="3.5.1.2"/>
    </reaction>
</comment>
<comment type="pathway">
    <text evidence="1">Amino-acid biosynthesis; L-histidine biosynthesis; L-histidine from 5-phospho-alpha-D-ribose 1-diphosphate: step 5/9.</text>
</comment>
<comment type="subunit">
    <text evidence="1">Heterodimer of HisH and HisF.</text>
</comment>
<comment type="subcellular location">
    <subcellularLocation>
        <location evidence="1">Cytoplasm</location>
    </subcellularLocation>
</comment>
<keyword id="KW-0028">Amino-acid biosynthesis</keyword>
<keyword id="KW-0963">Cytoplasm</keyword>
<keyword id="KW-0315">Glutamine amidotransferase</keyword>
<keyword id="KW-0368">Histidine biosynthesis</keyword>
<keyword id="KW-0378">Hydrolase</keyword>
<keyword id="KW-0456">Lyase</keyword>
<proteinExistence type="inferred from homology"/>
<gene>
    <name evidence="1" type="primary">hisH</name>
    <name type="ordered locus">CYA_0969</name>
</gene>
<protein>
    <recommendedName>
        <fullName evidence="1">Imidazole glycerol phosphate synthase subunit HisH</fullName>
        <ecNumber evidence="1">4.3.2.10</ecNumber>
    </recommendedName>
    <alternativeName>
        <fullName evidence="1">IGP synthase glutaminase subunit</fullName>
        <ecNumber evidence="1">3.5.1.2</ecNumber>
    </alternativeName>
    <alternativeName>
        <fullName evidence="1">IGP synthase subunit HisH</fullName>
    </alternativeName>
    <alternativeName>
        <fullName evidence="1">ImGP synthase subunit HisH</fullName>
        <shortName evidence="1">IGPS subunit HisH</shortName>
    </alternativeName>
</protein>
<dbReference type="EC" id="4.3.2.10" evidence="1"/>
<dbReference type="EC" id="3.5.1.2" evidence="1"/>
<dbReference type="EMBL" id="CP000239">
    <property type="protein sequence ID" value="ABC99170.1"/>
    <property type="molecule type" value="Genomic_DNA"/>
</dbReference>
<dbReference type="RefSeq" id="WP_011429853.1">
    <property type="nucleotide sequence ID" value="NC_007775.1"/>
</dbReference>
<dbReference type="SMR" id="Q2JVR1"/>
<dbReference type="STRING" id="321327.CYA_0969"/>
<dbReference type="KEGG" id="cya:CYA_0969"/>
<dbReference type="eggNOG" id="COG0118">
    <property type="taxonomic scope" value="Bacteria"/>
</dbReference>
<dbReference type="HOGENOM" id="CLU_071837_2_2_3"/>
<dbReference type="OrthoDB" id="9807137at2"/>
<dbReference type="UniPathway" id="UPA00031">
    <property type="reaction ID" value="UER00010"/>
</dbReference>
<dbReference type="Proteomes" id="UP000008818">
    <property type="component" value="Chromosome"/>
</dbReference>
<dbReference type="GO" id="GO:0005737">
    <property type="term" value="C:cytoplasm"/>
    <property type="evidence" value="ECO:0007669"/>
    <property type="project" value="UniProtKB-SubCell"/>
</dbReference>
<dbReference type="GO" id="GO:0004359">
    <property type="term" value="F:glutaminase activity"/>
    <property type="evidence" value="ECO:0007669"/>
    <property type="project" value="UniProtKB-EC"/>
</dbReference>
<dbReference type="GO" id="GO:0000107">
    <property type="term" value="F:imidazoleglycerol-phosphate synthase activity"/>
    <property type="evidence" value="ECO:0007669"/>
    <property type="project" value="UniProtKB-UniRule"/>
</dbReference>
<dbReference type="GO" id="GO:0016829">
    <property type="term" value="F:lyase activity"/>
    <property type="evidence" value="ECO:0007669"/>
    <property type="project" value="UniProtKB-KW"/>
</dbReference>
<dbReference type="GO" id="GO:0000105">
    <property type="term" value="P:L-histidine biosynthetic process"/>
    <property type="evidence" value="ECO:0007669"/>
    <property type="project" value="UniProtKB-UniRule"/>
</dbReference>
<dbReference type="CDD" id="cd01748">
    <property type="entry name" value="GATase1_IGP_Synthase"/>
    <property type="match status" value="1"/>
</dbReference>
<dbReference type="Gene3D" id="3.40.50.880">
    <property type="match status" value="1"/>
</dbReference>
<dbReference type="HAMAP" id="MF_00278">
    <property type="entry name" value="HisH"/>
    <property type="match status" value="1"/>
</dbReference>
<dbReference type="InterPro" id="IPR029062">
    <property type="entry name" value="Class_I_gatase-like"/>
</dbReference>
<dbReference type="InterPro" id="IPR017926">
    <property type="entry name" value="GATASE"/>
</dbReference>
<dbReference type="InterPro" id="IPR010139">
    <property type="entry name" value="Imidazole-glycPsynth_HisH"/>
</dbReference>
<dbReference type="NCBIfam" id="TIGR01855">
    <property type="entry name" value="IMP_synth_hisH"/>
    <property type="match status" value="1"/>
</dbReference>
<dbReference type="PANTHER" id="PTHR42701">
    <property type="entry name" value="IMIDAZOLE GLYCEROL PHOSPHATE SYNTHASE SUBUNIT HISH"/>
    <property type="match status" value="1"/>
</dbReference>
<dbReference type="PANTHER" id="PTHR42701:SF1">
    <property type="entry name" value="IMIDAZOLE GLYCEROL PHOSPHATE SYNTHASE SUBUNIT HISH"/>
    <property type="match status" value="1"/>
</dbReference>
<dbReference type="Pfam" id="PF00117">
    <property type="entry name" value="GATase"/>
    <property type="match status" value="1"/>
</dbReference>
<dbReference type="PIRSF" id="PIRSF000495">
    <property type="entry name" value="Amidotransf_hisH"/>
    <property type="match status" value="1"/>
</dbReference>
<dbReference type="SUPFAM" id="SSF52317">
    <property type="entry name" value="Class I glutamine amidotransferase-like"/>
    <property type="match status" value="1"/>
</dbReference>
<dbReference type="PROSITE" id="PS51273">
    <property type="entry name" value="GATASE_TYPE_1"/>
    <property type="match status" value="1"/>
</dbReference>
<feature type="chain" id="PRO_1000114794" description="Imidazole glycerol phosphate synthase subunit HisH">
    <location>
        <begin position="1"/>
        <end position="216"/>
    </location>
</feature>
<feature type="domain" description="Glutamine amidotransferase type-1" evidence="1">
    <location>
        <begin position="5"/>
        <end position="213"/>
    </location>
</feature>
<feature type="active site" description="Nucleophile" evidence="1">
    <location>
        <position position="83"/>
    </location>
</feature>
<feature type="active site" evidence="1">
    <location>
        <position position="188"/>
    </location>
</feature>
<feature type="active site" evidence="1">
    <location>
        <position position="190"/>
    </location>
</feature>
<accession>Q2JVR1</accession>
<organism>
    <name type="scientific">Synechococcus sp. (strain JA-3-3Ab)</name>
    <name type="common">Cyanobacteria bacterium Yellowstone A-Prime</name>
    <dbReference type="NCBI Taxonomy" id="321327"/>
    <lineage>
        <taxon>Bacteria</taxon>
        <taxon>Bacillati</taxon>
        <taxon>Cyanobacteriota</taxon>
        <taxon>Cyanophyceae</taxon>
        <taxon>Synechococcales</taxon>
        <taxon>Synechococcaceae</taxon>
        <taxon>Synechococcus</taxon>
    </lineage>
</organism>
<evidence type="ECO:0000255" key="1">
    <source>
        <dbReference type="HAMAP-Rule" id="MF_00278"/>
    </source>
</evidence>
<reference key="1">
    <citation type="journal article" date="2007" name="ISME J.">
        <title>Population level functional diversity in a microbial community revealed by comparative genomic and metagenomic analyses.</title>
        <authorList>
            <person name="Bhaya D."/>
            <person name="Grossman A.R."/>
            <person name="Steunou A.-S."/>
            <person name="Khuri N."/>
            <person name="Cohan F.M."/>
            <person name="Hamamura N."/>
            <person name="Melendrez M.C."/>
            <person name="Bateson M.M."/>
            <person name="Ward D.M."/>
            <person name="Heidelberg J.F."/>
        </authorList>
    </citation>
    <scope>NUCLEOTIDE SEQUENCE [LARGE SCALE GENOMIC DNA]</scope>
    <source>
        <strain>JA-3-3Ab</strain>
    </source>
</reference>
<name>HIS5_SYNJA</name>